<dbReference type="RefSeq" id="NP_001013029.1">
    <property type="nucleotide sequence ID" value="NM_001013011.2"/>
</dbReference>
<dbReference type="SMR" id="Q5DRD3"/>
<dbReference type="FunCoup" id="Q5DRD3">
    <property type="interactions" value="20"/>
</dbReference>
<dbReference type="STRING" id="9598.ENSPTRP00000029640"/>
<dbReference type="GlyCosmos" id="Q5DRD3">
    <property type="glycosylation" value="3 sites, No reported glycans"/>
</dbReference>
<dbReference type="PaxDb" id="9598-ENSPTRP00000029640"/>
<dbReference type="Ensembl" id="ENSPTRT00000032084.3">
    <property type="protein sequence ID" value="ENSPTRP00000029640.2"/>
    <property type="gene ID" value="ENSPTRG00000017343.3"/>
</dbReference>
<dbReference type="GeneID" id="462137"/>
<dbReference type="KEGG" id="ptr:462137"/>
<dbReference type="CTD" id="56121"/>
<dbReference type="eggNOG" id="KOG3594">
    <property type="taxonomic scope" value="Eukaryota"/>
</dbReference>
<dbReference type="GeneTree" id="ENSGT00940000162842"/>
<dbReference type="HOGENOM" id="CLU_006480_3_0_1"/>
<dbReference type="InParanoid" id="Q5DRD3"/>
<dbReference type="OMA" id="GWEPRRY"/>
<dbReference type="OrthoDB" id="10104at9604"/>
<dbReference type="TreeFam" id="TF332299"/>
<dbReference type="Proteomes" id="UP000002277">
    <property type="component" value="Chromosome 5"/>
</dbReference>
<dbReference type="Bgee" id="ENSPTRG00000017343">
    <property type="expression patterns" value="Expressed in cerebellar cortex and 16 other cell types or tissues"/>
</dbReference>
<dbReference type="GO" id="GO:0032391">
    <property type="term" value="C:photoreceptor connecting cilium"/>
    <property type="evidence" value="ECO:0007669"/>
    <property type="project" value="Ensembl"/>
</dbReference>
<dbReference type="GO" id="GO:0005886">
    <property type="term" value="C:plasma membrane"/>
    <property type="evidence" value="ECO:0000318"/>
    <property type="project" value="GO_Central"/>
</dbReference>
<dbReference type="GO" id="GO:0005509">
    <property type="term" value="F:calcium ion binding"/>
    <property type="evidence" value="ECO:0007669"/>
    <property type="project" value="InterPro"/>
</dbReference>
<dbReference type="GO" id="GO:0007155">
    <property type="term" value="P:cell adhesion"/>
    <property type="evidence" value="ECO:0000318"/>
    <property type="project" value="GO_Central"/>
</dbReference>
<dbReference type="GO" id="GO:0007156">
    <property type="term" value="P:homophilic cell adhesion via plasma membrane adhesion molecules"/>
    <property type="evidence" value="ECO:0007669"/>
    <property type="project" value="InterPro"/>
</dbReference>
<dbReference type="GO" id="GO:0007399">
    <property type="term" value="P:nervous system development"/>
    <property type="evidence" value="ECO:0007669"/>
    <property type="project" value="UniProtKB-ARBA"/>
</dbReference>
<dbReference type="CDD" id="cd11304">
    <property type="entry name" value="Cadherin_repeat"/>
    <property type="match status" value="5"/>
</dbReference>
<dbReference type="FunFam" id="2.60.40.60:FF:000001">
    <property type="entry name" value="Protocadherin alpha 2"/>
    <property type="match status" value="1"/>
</dbReference>
<dbReference type="FunFam" id="2.60.40.60:FF:000002">
    <property type="entry name" value="Protocadherin alpha 2"/>
    <property type="match status" value="1"/>
</dbReference>
<dbReference type="FunFam" id="2.60.40.60:FF:000006">
    <property type="entry name" value="Protocadherin alpha 2"/>
    <property type="match status" value="1"/>
</dbReference>
<dbReference type="FunFam" id="2.60.40.60:FF:000046">
    <property type="entry name" value="Protocadherin beta 5"/>
    <property type="match status" value="1"/>
</dbReference>
<dbReference type="FunFam" id="2.60.40.60:FF:000309">
    <property type="entry name" value="Protocadherin beta-8"/>
    <property type="match status" value="1"/>
</dbReference>
<dbReference type="FunFam" id="2.60.40.60:FF:000018">
    <property type="entry name" value="Protocadherin gamma c3"/>
    <property type="match status" value="1"/>
</dbReference>
<dbReference type="Gene3D" id="2.60.40.60">
    <property type="entry name" value="Cadherins"/>
    <property type="match status" value="6"/>
</dbReference>
<dbReference type="InterPro" id="IPR002126">
    <property type="entry name" value="Cadherin-like_dom"/>
</dbReference>
<dbReference type="InterPro" id="IPR015919">
    <property type="entry name" value="Cadherin-like_sf"/>
</dbReference>
<dbReference type="InterPro" id="IPR032455">
    <property type="entry name" value="Cadherin_C"/>
</dbReference>
<dbReference type="InterPro" id="IPR020894">
    <property type="entry name" value="Cadherin_CS"/>
</dbReference>
<dbReference type="InterPro" id="IPR013164">
    <property type="entry name" value="Cadherin_N"/>
</dbReference>
<dbReference type="InterPro" id="IPR050174">
    <property type="entry name" value="Protocadherin/Cadherin-CA"/>
</dbReference>
<dbReference type="PANTHER" id="PTHR24028">
    <property type="entry name" value="CADHERIN-87A"/>
    <property type="match status" value="1"/>
</dbReference>
<dbReference type="PANTHER" id="PTHR24028:SF97">
    <property type="entry name" value="PROTOCADHERIN BETA-15"/>
    <property type="match status" value="1"/>
</dbReference>
<dbReference type="Pfam" id="PF00028">
    <property type="entry name" value="Cadherin"/>
    <property type="match status" value="5"/>
</dbReference>
<dbReference type="Pfam" id="PF08266">
    <property type="entry name" value="Cadherin_2"/>
    <property type="match status" value="1"/>
</dbReference>
<dbReference type="Pfam" id="PF16492">
    <property type="entry name" value="Cadherin_C_2"/>
    <property type="match status" value="1"/>
</dbReference>
<dbReference type="PRINTS" id="PR00205">
    <property type="entry name" value="CADHERIN"/>
</dbReference>
<dbReference type="SMART" id="SM00112">
    <property type="entry name" value="CA"/>
    <property type="match status" value="5"/>
</dbReference>
<dbReference type="SUPFAM" id="SSF49313">
    <property type="entry name" value="Cadherin-like"/>
    <property type="match status" value="6"/>
</dbReference>
<dbReference type="PROSITE" id="PS00232">
    <property type="entry name" value="CADHERIN_1"/>
    <property type="match status" value="5"/>
</dbReference>
<dbReference type="PROSITE" id="PS50268">
    <property type="entry name" value="CADHERIN_2"/>
    <property type="match status" value="6"/>
</dbReference>
<name>PCDBF_PANTR</name>
<proteinExistence type="inferred from homology"/>
<protein>
    <recommendedName>
        <fullName>Protocadherin beta-15</fullName>
        <shortName>PCDH-beta-15</shortName>
    </recommendedName>
</protein>
<comment type="function">
    <text>Potential calcium-dependent cell-adhesion protein. May be involved in the establishment and maintenance of specific neuronal connections in the brain.</text>
</comment>
<comment type="subcellular location">
    <subcellularLocation>
        <location evidence="1">Cell membrane</location>
        <topology evidence="1">Single-pass type I membrane protein</topology>
    </subcellularLocation>
</comment>
<gene>
    <name type="primary">PCDHB15</name>
</gene>
<accession>Q5DRD3</accession>
<evidence type="ECO:0000250" key="1"/>
<evidence type="ECO:0000255" key="2"/>
<evidence type="ECO:0000255" key="3">
    <source>
        <dbReference type="PROSITE-ProRule" id="PRU00043"/>
    </source>
</evidence>
<reference key="1">
    <citation type="journal article" date="2005" name="Nature">
        <title>Initial sequence of the chimpanzee genome and comparison with the human genome.</title>
        <authorList>
            <consortium name="Chimpanzee sequencing and analysis consortium"/>
        </authorList>
    </citation>
    <scope>NUCLEOTIDE SEQUENCE [LARGE SCALE GENOMIC DNA]</scope>
</reference>
<reference key="2">
    <citation type="journal article" date="2005" name="Genetics">
        <title>Comparative genomics and diversifying selection of the clustered vertebrate protocadherin genes.</title>
        <authorList>
            <person name="Wu Q."/>
        </authorList>
    </citation>
    <scope>IDENTIFICATION</scope>
</reference>
<keyword id="KW-0106">Calcium</keyword>
<keyword id="KW-0130">Cell adhesion</keyword>
<keyword id="KW-1003">Cell membrane</keyword>
<keyword id="KW-0325">Glycoprotein</keyword>
<keyword id="KW-0472">Membrane</keyword>
<keyword id="KW-1185">Reference proteome</keyword>
<keyword id="KW-0677">Repeat</keyword>
<keyword id="KW-0732">Signal</keyword>
<keyword id="KW-0812">Transmembrane</keyword>
<keyword id="KW-1133">Transmembrane helix</keyword>
<organism>
    <name type="scientific">Pan troglodytes</name>
    <name type="common">Chimpanzee</name>
    <dbReference type="NCBI Taxonomy" id="9598"/>
    <lineage>
        <taxon>Eukaryota</taxon>
        <taxon>Metazoa</taxon>
        <taxon>Chordata</taxon>
        <taxon>Craniata</taxon>
        <taxon>Vertebrata</taxon>
        <taxon>Euteleostomi</taxon>
        <taxon>Mammalia</taxon>
        <taxon>Eutheria</taxon>
        <taxon>Euarchontoglires</taxon>
        <taxon>Primates</taxon>
        <taxon>Haplorrhini</taxon>
        <taxon>Catarrhini</taxon>
        <taxon>Hominidae</taxon>
        <taxon>Pan</taxon>
    </lineage>
</organism>
<feature type="signal peptide" evidence="2">
    <location>
        <begin position="1"/>
        <end position="26"/>
    </location>
</feature>
<feature type="chain" id="PRO_0000003943" description="Protocadherin beta-15">
    <location>
        <begin position="27"/>
        <end position="787"/>
    </location>
</feature>
<feature type="topological domain" description="Extracellular" evidence="2">
    <location>
        <begin position="27"/>
        <end position="690"/>
    </location>
</feature>
<feature type="transmembrane region" description="Helical" evidence="2">
    <location>
        <begin position="691"/>
        <end position="711"/>
    </location>
</feature>
<feature type="topological domain" description="Cytoplasmic" evidence="2">
    <location>
        <begin position="712"/>
        <end position="787"/>
    </location>
</feature>
<feature type="domain" description="Cadherin 1" evidence="3">
    <location>
        <begin position="35"/>
        <end position="133"/>
    </location>
</feature>
<feature type="domain" description="Cadherin 2" evidence="3">
    <location>
        <begin position="138"/>
        <end position="242"/>
    </location>
</feature>
<feature type="domain" description="Cadherin 3" evidence="3">
    <location>
        <begin position="247"/>
        <end position="347"/>
    </location>
</feature>
<feature type="domain" description="Cadherin 4" evidence="3">
    <location>
        <begin position="352"/>
        <end position="451"/>
    </location>
</feature>
<feature type="domain" description="Cadherin 5" evidence="3">
    <location>
        <begin position="456"/>
        <end position="561"/>
    </location>
</feature>
<feature type="domain" description="Cadherin 6" evidence="3">
    <location>
        <begin position="568"/>
        <end position="671"/>
    </location>
</feature>
<feature type="glycosylation site" description="N-linked (GlcNAc...) asparagine" evidence="2">
    <location>
        <position position="418"/>
    </location>
</feature>
<feature type="glycosylation site" description="N-linked (GlcNAc...) asparagine" evidence="2">
    <location>
        <position position="436"/>
    </location>
</feature>
<feature type="glycosylation site" description="N-linked (GlcNAc...) asparagine" evidence="2">
    <location>
        <position position="567"/>
    </location>
</feature>
<sequence>MEPAGERFPEQRQVLILLLLLEVTLAGWEPRRYSVMEETERGSFVANLANDLGLGVGELAERGARVVSEDNEQGLQLDLQTGQLILNEKLDREKLCGPTEPCIMHFQVLLKKPLEVIRAELLVTDINDHSPEFPEREITLKIPETSSLGTVFPLKKARDLDVGSNNVQNYNISPNSHFHVSTRTRGDGRKYPELVLDTELDREEQAELRLTLTAVDGGSPPRSGTVQILILVLDANDNAPEFAQALYEVQVPENSPVGSLVVKVSARDLDTGTNGEISYSLYYSSEEINKPFELSSLSGEIRLIKKLDFETMSSYDLDIEASDGGGLSGKCSVSVKVLDVNDNFPELSISSLTSPIPENSPETEVALFRIRDRDSGENGKMICSIQDDVPFKLKPSVENFYRLVTEGALDRETRAEYNITITITDLGTPRLKTQHNITVLVSDVNDNAPAFTQTSYTLFVRENNSPALHIGSVSATDRDSGTNAQVTYSLLPPQDPHLPLASLVSINTDNGHLFALRSLDYEALQAFEFHVGATDRGSPALSSEALVRVLVLDANDNSPFVLYPLQNGSAPCTELVPRAAEPGYVVTKVVAVDGDSGQNAWLSYQLLKATEPGLFGVWAHNGEVRTARLLSERDVAKHRLVVLVKDNGEPPRSATATLQVLLVDGFSQPYLPLPEAAPAQAQADSLTVYLVVALASVSSLFLFSVLLFVAVRLCRRSRAASVGRYSVPEGPFPGHRVDVSGTGTLSQSYQYEVCLTGGSESNDFKFLKPIFPNIVSQDSRRKSEFLE</sequence>